<organism>
    <name type="scientific">Caenorhabditis briggsae</name>
    <dbReference type="NCBI Taxonomy" id="6238"/>
    <lineage>
        <taxon>Eukaryota</taxon>
        <taxon>Metazoa</taxon>
        <taxon>Ecdysozoa</taxon>
        <taxon>Nematoda</taxon>
        <taxon>Chromadorea</taxon>
        <taxon>Rhabditida</taxon>
        <taxon>Rhabditina</taxon>
        <taxon>Rhabditomorpha</taxon>
        <taxon>Rhabditoidea</taxon>
        <taxon>Rhabditidae</taxon>
        <taxon>Peloderinae</taxon>
        <taxon>Caenorhabditis</taxon>
    </lineage>
</organism>
<feature type="chain" id="PRO_0000394768" description="Zinc transporter zipt-7.1">
    <location>
        <begin position="1"/>
        <end position="392"/>
    </location>
</feature>
<feature type="transmembrane region" description="Helical" evidence="2">
    <location>
        <begin position="82"/>
        <end position="102"/>
    </location>
</feature>
<feature type="transmembrane region" description="Helical" evidence="2">
    <location>
        <begin position="114"/>
        <end position="134"/>
    </location>
</feature>
<feature type="transmembrane region" description="Helical" evidence="2">
    <location>
        <begin position="170"/>
        <end position="190"/>
    </location>
</feature>
<feature type="transmembrane region" description="Helical" evidence="2">
    <location>
        <begin position="255"/>
        <end position="275"/>
    </location>
</feature>
<feature type="transmembrane region" description="Helical" evidence="2">
    <location>
        <begin position="304"/>
        <end position="324"/>
    </location>
</feature>
<feature type="transmembrane region" description="Helical" evidence="2">
    <location>
        <begin position="331"/>
        <end position="351"/>
    </location>
</feature>
<feature type="transmembrane region" description="Helical" evidence="2">
    <location>
        <begin position="371"/>
        <end position="391"/>
    </location>
</feature>
<feature type="region of interest" description="Disordered" evidence="3">
    <location>
        <begin position="139"/>
        <end position="162"/>
    </location>
</feature>
<feature type="compositionally biased region" description="Basic and acidic residues" evidence="3">
    <location>
        <begin position="142"/>
        <end position="162"/>
    </location>
</feature>
<feature type="glycosylation site" description="N-linked (GlcNAc...) asparagine" evidence="2">
    <location>
        <position position="63"/>
    </location>
</feature>
<feature type="glycosylation site" description="N-linked (GlcNAc...) asparagine" evidence="2">
    <location>
        <position position="248"/>
    </location>
</feature>
<feature type="glycosylation site" description="N-linked (GlcNAc...) asparagine" evidence="2">
    <location>
        <position position="361"/>
    </location>
</feature>
<gene>
    <name evidence="6" type="primary">zipt-7.1</name>
    <name evidence="6" type="synonym">hke-4.1</name>
    <name evidence="6" type="ORF">CBG00379</name>
</gene>
<evidence type="ECO:0000250" key="1">
    <source>
        <dbReference type="UniProtKB" id="Q9XUC4"/>
    </source>
</evidence>
<evidence type="ECO:0000255" key="2"/>
<evidence type="ECO:0000256" key="3">
    <source>
        <dbReference type="SAM" id="MobiDB-lite"/>
    </source>
</evidence>
<evidence type="ECO:0000305" key="4"/>
<evidence type="ECO:0000312" key="5">
    <source>
        <dbReference type="EMBL" id="CAP21838.2"/>
    </source>
</evidence>
<evidence type="ECO:0000312" key="6">
    <source>
        <dbReference type="WormBase" id="CBG00379"/>
    </source>
</evidence>
<sequence length="392" mass="42962">MRLLTVVLLLPLLIICHEHSHHHHDDEGSAVLTKVGLDDHELHEHDHDHDHDHKILRWDEKKNHSSHEKVPHSQLSTLKVWVFSLSAVIGISLAPCTLLFFIPAQHANGPFLKILLAFGAGGLLGDALLHIIPHSLNPHSHGAHDHDHAHSHDHAHNDHSHDHSDQLRVGIYVIAGILVFMMVEQLVRIIKGGHCHSHENGHIVADEHRHLNDDHHHHHNGEKKQEVEGLKDIKASAYLNLVADFVHNMTDGLAIGASFSAGSTLGWVTTLTVLLHELPHEVGDFAILVQSGFSKYQAIRMQAVTALGAITGCIFSLLISNPVLSAEGDTGAIMPFTAGGFIYIATVSVIPELLESGDHNNMSKVAKMAQSLVHLIAICMGVGMMYIVSLVE</sequence>
<proteinExistence type="inferred from homology"/>
<keyword id="KW-0221">Differentiation</keyword>
<keyword id="KW-0325">Glycoprotein</keyword>
<keyword id="KW-0406">Ion transport</keyword>
<keyword id="KW-0472">Membrane</keyword>
<keyword id="KW-1185">Reference proteome</keyword>
<keyword id="KW-0744">Spermatogenesis</keyword>
<keyword id="KW-0812">Transmembrane</keyword>
<keyword id="KW-1133">Transmembrane helix</keyword>
<keyword id="KW-0813">Transport</keyword>
<keyword id="KW-0862">Zinc</keyword>
<keyword id="KW-0864">Zinc transport</keyword>
<comment type="function">
    <text evidence="1">Zinc transporter which regulates intracellular zinc levels (By similarity). Required for spermatogenesis in both hermaphrodites and males where it resides in an inactive form in immature sperm, spermatids, but is likely activated in response to reduced spe-4 and spe-6 function (By similarity). Upon activation, mediates the release of zinc from internal stores in spermatids into the cytoplasm (By similarity). The resulting increase in cytoplasmic zinc levels promotes spermatid activation and subsequent differentiation into mature motile sperm that are capable of fertilization (By similarity).</text>
</comment>
<comment type="subcellular location">
    <subcellularLocation>
        <location evidence="1">Membrane</location>
        <topology evidence="2 4">Multi-pass membrane protein</topology>
    </subcellularLocation>
    <text evidence="1">Localizes to membranous organelles.</text>
</comment>
<comment type="similarity">
    <text evidence="2">Belongs to the ZIP transporter (TC 2.A.5) family. KE4/Catsup subfamily.</text>
</comment>
<accession>A8WMY3</accession>
<reference evidence="5" key="1">
    <citation type="journal article" date="2003" name="PLoS Biol.">
        <title>The genome sequence of Caenorhabditis briggsae: a platform for comparative genomics.</title>
        <authorList>
            <person name="Stein L.D."/>
            <person name="Bao Z."/>
            <person name="Blasiar D."/>
            <person name="Blumenthal T."/>
            <person name="Brent M.R."/>
            <person name="Chen N."/>
            <person name="Chinwalla A."/>
            <person name="Clarke L."/>
            <person name="Clee C."/>
            <person name="Coghlan A."/>
            <person name="Coulson A."/>
            <person name="D'Eustachio P."/>
            <person name="Fitch D.H.A."/>
            <person name="Fulton L.A."/>
            <person name="Fulton R.E."/>
            <person name="Griffiths-Jones S."/>
            <person name="Harris T.W."/>
            <person name="Hillier L.W."/>
            <person name="Kamath R."/>
            <person name="Kuwabara P.E."/>
            <person name="Mardis E.R."/>
            <person name="Marra M.A."/>
            <person name="Miner T.L."/>
            <person name="Minx P."/>
            <person name="Mullikin J.C."/>
            <person name="Plumb R.W."/>
            <person name="Rogers J."/>
            <person name="Schein J.E."/>
            <person name="Sohrmann M."/>
            <person name="Spieth J."/>
            <person name="Stajich J.E."/>
            <person name="Wei C."/>
            <person name="Willey D."/>
            <person name="Wilson R.K."/>
            <person name="Durbin R.M."/>
            <person name="Waterston R.H."/>
        </authorList>
    </citation>
    <scope>NUCLEOTIDE SEQUENCE [LARGE SCALE GENOMIC DNA]</scope>
    <source>
        <strain>AF16</strain>
    </source>
</reference>
<dbReference type="EMBL" id="HE600968">
    <property type="protein sequence ID" value="CAP21838.2"/>
    <property type="molecule type" value="Genomic_DNA"/>
</dbReference>
<dbReference type="SMR" id="A8WMY3"/>
<dbReference type="FunCoup" id="A8WMY3">
    <property type="interactions" value="95"/>
</dbReference>
<dbReference type="STRING" id="6238.A8WMY3"/>
<dbReference type="GlyCosmos" id="A8WMY3">
    <property type="glycosylation" value="3 sites, No reported glycans"/>
</dbReference>
<dbReference type="EnsemblMetazoa" id="CBG00379.1">
    <property type="protein sequence ID" value="CBG00379.1"/>
    <property type="gene ID" value="WBGene00023775"/>
</dbReference>
<dbReference type="EnsemblMetazoa" id="CBG00379.2">
    <property type="protein sequence ID" value="CBG00379.2"/>
    <property type="gene ID" value="WBGene00023775"/>
</dbReference>
<dbReference type="WormBase" id="CBG00379">
    <property type="protein sequence ID" value="CBP26486"/>
    <property type="gene ID" value="WBGene00023775"/>
    <property type="gene designation" value="Cbr-zipt-7.1"/>
</dbReference>
<dbReference type="eggNOG" id="KOG2693">
    <property type="taxonomic scope" value="Eukaryota"/>
</dbReference>
<dbReference type="HOGENOM" id="CLU_015114_0_1_1"/>
<dbReference type="InParanoid" id="A8WMY3"/>
<dbReference type="OMA" id="GMMYIVS"/>
<dbReference type="OrthoDB" id="200954at2759"/>
<dbReference type="Proteomes" id="UP000008549">
    <property type="component" value="Unassembled WGS sequence"/>
</dbReference>
<dbReference type="GO" id="GO:0016020">
    <property type="term" value="C:membrane"/>
    <property type="evidence" value="ECO:0007669"/>
    <property type="project" value="UniProtKB-SubCell"/>
</dbReference>
<dbReference type="GO" id="GO:0005385">
    <property type="term" value="F:zinc ion transmembrane transporter activity"/>
    <property type="evidence" value="ECO:0000318"/>
    <property type="project" value="GO_Central"/>
</dbReference>
<dbReference type="GO" id="GO:0006882">
    <property type="term" value="P:intracellular zinc ion homeostasis"/>
    <property type="evidence" value="ECO:0000318"/>
    <property type="project" value="GO_Central"/>
</dbReference>
<dbReference type="GO" id="GO:0090727">
    <property type="term" value="P:positive regulation of brood size"/>
    <property type="evidence" value="ECO:0007669"/>
    <property type="project" value="EnsemblMetazoa"/>
</dbReference>
<dbReference type="GO" id="GO:1905516">
    <property type="term" value="P:positive regulation of fertilization"/>
    <property type="evidence" value="ECO:0007669"/>
    <property type="project" value="EnsemblMetazoa"/>
</dbReference>
<dbReference type="GO" id="GO:0046662">
    <property type="term" value="P:regulation of egg-laying behavior"/>
    <property type="evidence" value="ECO:0007669"/>
    <property type="project" value="EnsemblMetazoa"/>
</dbReference>
<dbReference type="GO" id="GO:0048515">
    <property type="term" value="P:spermatid differentiation"/>
    <property type="evidence" value="ECO:0007669"/>
    <property type="project" value="EnsemblMetazoa"/>
</dbReference>
<dbReference type="GO" id="GO:0071577">
    <property type="term" value="P:zinc ion transmembrane transport"/>
    <property type="evidence" value="ECO:0000318"/>
    <property type="project" value="GO_Central"/>
</dbReference>
<dbReference type="InterPro" id="IPR003689">
    <property type="entry name" value="ZIP"/>
</dbReference>
<dbReference type="PANTHER" id="PTHR16950">
    <property type="entry name" value="ZINC TRANSPORTER SLC39A7 HISTIDINE-RICH MEMBRANE PROTEIN KE4"/>
    <property type="match status" value="1"/>
</dbReference>
<dbReference type="PANTHER" id="PTHR16950:SF18">
    <property type="entry name" value="ZINC TRANSPORTER ZIPT-7.1"/>
    <property type="match status" value="1"/>
</dbReference>
<dbReference type="Pfam" id="PF02535">
    <property type="entry name" value="Zip"/>
    <property type="match status" value="1"/>
</dbReference>
<name>ZPT71_CAEBR</name>
<protein>
    <recommendedName>
        <fullName evidence="4">Zinc transporter zipt-7.1</fullName>
    </recommendedName>
    <alternativeName>
        <fullName evidence="1">Histidine-rich membrane protein KE4 homolog 1</fullName>
    </alternativeName>
</protein>